<feature type="chain" id="PRO_1000203181" description="Tryptophan synthase alpha chain">
    <location>
        <begin position="1"/>
        <end position="268"/>
    </location>
</feature>
<feature type="active site" description="Proton acceptor" evidence="1">
    <location>
        <position position="49"/>
    </location>
</feature>
<feature type="active site" description="Proton acceptor" evidence="1">
    <location>
        <position position="60"/>
    </location>
</feature>
<gene>
    <name evidence="1" type="primary">trpA</name>
    <name type="ordered locus">NT01EI_1687</name>
</gene>
<proteinExistence type="inferred from homology"/>
<evidence type="ECO:0000255" key="1">
    <source>
        <dbReference type="HAMAP-Rule" id="MF_00131"/>
    </source>
</evidence>
<accession>C5BDB6</accession>
<dbReference type="EC" id="4.2.1.20" evidence="1"/>
<dbReference type="EMBL" id="CP001600">
    <property type="protein sequence ID" value="ACR68868.1"/>
    <property type="molecule type" value="Genomic_DNA"/>
</dbReference>
<dbReference type="RefSeq" id="WP_015871024.1">
    <property type="nucleotide sequence ID" value="NZ_CP169062.1"/>
</dbReference>
<dbReference type="SMR" id="C5BDB6"/>
<dbReference type="STRING" id="67780.B6E78_01625"/>
<dbReference type="GeneID" id="69538665"/>
<dbReference type="KEGG" id="eic:NT01EI_1687"/>
<dbReference type="PATRIC" id="fig|634503.3.peg.1514"/>
<dbReference type="HOGENOM" id="CLU_016734_0_4_6"/>
<dbReference type="OrthoDB" id="9804578at2"/>
<dbReference type="UniPathway" id="UPA00035">
    <property type="reaction ID" value="UER00044"/>
</dbReference>
<dbReference type="Proteomes" id="UP000001485">
    <property type="component" value="Chromosome"/>
</dbReference>
<dbReference type="GO" id="GO:0005829">
    <property type="term" value="C:cytosol"/>
    <property type="evidence" value="ECO:0007669"/>
    <property type="project" value="TreeGrafter"/>
</dbReference>
<dbReference type="GO" id="GO:0004834">
    <property type="term" value="F:tryptophan synthase activity"/>
    <property type="evidence" value="ECO:0007669"/>
    <property type="project" value="UniProtKB-UniRule"/>
</dbReference>
<dbReference type="CDD" id="cd04724">
    <property type="entry name" value="Tryptophan_synthase_alpha"/>
    <property type="match status" value="1"/>
</dbReference>
<dbReference type="FunFam" id="3.20.20.70:FF:000037">
    <property type="entry name" value="Tryptophan synthase alpha chain"/>
    <property type="match status" value="1"/>
</dbReference>
<dbReference type="Gene3D" id="3.20.20.70">
    <property type="entry name" value="Aldolase class I"/>
    <property type="match status" value="1"/>
</dbReference>
<dbReference type="HAMAP" id="MF_00131">
    <property type="entry name" value="Trp_synth_alpha"/>
    <property type="match status" value="1"/>
</dbReference>
<dbReference type="InterPro" id="IPR013785">
    <property type="entry name" value="Aldolase_TIM"/>
</dbReference>
<dbReference type="InterPro" id="IPR011060">
    <property type="entry name" value="RibuloseP-bd_barrel"/>
</dbReference>
<dbReference type="InterPro" id="IPR018204">
    <property type="entry name" value="Trp_synthase_alpha_AS"/>
</dbReference>
<dbReference type="InterPro" id="IPR002028">
    <property type="entry name" value="Trp_synthase_suA"/>
</dbReference>
<dbReference type="NCBIfam" id="TIGR00262">
    <property type="entry name" value="trpA"/>
    <property type="match status" value="1"/>
</dbReference>
<dbReference type="PANTHER" id="PTHR43406:SF1">
    <property type="entry name" value="TRYPTOPHAN SYNTHASE ALPHA CHAIN, CHLOROPLASTIC"/>
    <property type="match status" value="1"/>
</dbReference>
<dbReference type="PANTHER" id="PTHR43406">
    <property type="entry name" value="TRYPTOPHAN SYNTHASE, ALPHA CHAIN"/>
    <property type="match status" value="1"/>
</dbReference>
<dbReference type="Pfam" id="PF00290">
    <property type="entry name" value="Trp_syntA"/>
    <property type="match status" value="1"/>
</dbReference>
<dbReference type="SUPFAM" id="SSF51366">
    <property type="entry name" value="Ribulose-phoshate binding barrel"/>
    <property type="match status" value="1"/>
</dbReference>
<dbReference type="PROSITE" id="PS00167">
    <property type="entry name" value="TRP_SYNTHASE_ALPHA"/>
    <property type="match status" value="1"/>
</dbReference>
<reference key="1">
    <citation type="submission" date="2009-03" db="EMBL/GenBank/DDBJ databases">
        <title>Complete genome sequence of Edwardsiella ictaluri 93-146.</title>
        <authorList>
            <person name="Williams M.L."/>
            <person name="Gillaspy A.F."/>
            <person name="Dyer D.W."/>
            <person name="Thune R.L."/>
            <person name="Waldbieser G.C."/>
            <person name="Schuster S.C."/>
            <person name="Gipson J."/>
            <person name="Zaitshik J."/>
            <person name="Landry C."/>
            <person name="Lawrence M.L."/>
        </authorList>
    </citation>
    <scope>NUCLEOTIDE SEQUENCE [LARGE SCALE GENOMIC DNA]</scope>
    <source>
        <strain>93-146</strain>
    </source>
</reference>
<name>TRPA_EDWI9</name>
<sequence>MTRYQTLFTHLQRRQEGALVPFVTLGDPTPSLSLQIIDALVESGADALELGIPFSDPLADGPVIQSATLRALQAGVTPERCFTLLATLREKYPQLPIGLLMYANLVVNPGIDTFYRRCAQAGIDSVLIADVPLEESAPFHAAAQRYGVAPIYLCPPNADDVLLQQLAARSQGYVYLLSRAGVTGSDRPCLPPLRHLTTRLAALGAAPTLQGFGIQTPDQVRSALDGGAAGAISGSAVVDLIARHLDTPPQMLQQLRAFIQTMKAATRA</sequence>
<protein>
    <recommendedName>
        <fullName evidence="1">Tryptophan synthase alpha chain</fullName>
        <ecNumber evidence="1">4.2.1.20</ecNumber>
    </recommendedName>
</protein>
<organism>
    <name type="scientific">Edwardsiella ictaluri (strain 93-146)</name>
    <dbReference type="NCBI Taxonomy" id="634503"/>
    <lineage>
        <taxon>Bacteria</taxon>
        <taxon>Pseudomonadati</taxon>
        <taxon>Pseudomonadota</taxon>
        <taxon>Gammaproteobacteria</taxon>
        <taxon>Enterobacterales</taxon>
        <taxon>Hafniaceae</taxon>
        <taxon>Edwardsiella</taxon>
    </lineage>
</organism>
<comment type="function">
    <text evidence="1">The alpha subunit is responsible for the aldol cleavage of indoleglycerol phosphate to indole and glyceraldehyde 3-phosphate.</text>
</comment>
<comment type="catalytic activity">
    <reaction evidence="1">
        <text>(1S,2R)-1-C-(indol-3-yl)glycerol 3-phosphate + L-serine = D-glyceraldehyde 3-phosphate + L-tryptophan + H2O</text>
        <dbReference type="Rhea" id="RHEA:10532"/>
        <dbReference type="ChEBI" id="CHEBI:15377"/>
        <dbReference type="ChEBI" id="CHEBI:33384"/>
        <dbReference type="ChEBI" id="CHEBI:57912"/>
        <dbReference type="ChEBI" id="CHEBI:58866"/>
        <dbReference type="ChEBI" id="CHEBI:59776"/>
        <dbReference type="EC" id="4.2.1.20"/>
    </reaction>
</comment>
<comment type="pathway">
    <text evidence="1">Amino-acid biosynthesis; L-tryptophan biosynthesis; L-tryptophan from chorismate: step 5/5.</text>
</comment>
<comment type="subunit">
    <text evidence="1">Tetramer of two alpha and two beta chains.</text>
</comment>
<comment type="similarity">
    <text evidence="1">Belongs to the TrpA family.</text>
</comment>
<keyword id="KW-0028">Amino-acid biosynthesis</keyword>
<keyword id="KW-0057">Aromatic amino acid biosynthesis</keyword>
<keyword id="KW-0456">Lyase</keyword>
<keyword id="KW-0822">Tryptophan biosynthesis</keyword>